<keyword id="KW-0687">Ribonucleoprotein</keyword>
<keyword id="KW-0689">Ribosomal protein</keyword>
<keyword id="KW-0694">RNA-binding</keyword>
<keyword id="KW-0699">rRNA-binding</keyword>
<protein>
    <recommendedName>
        <fullName evidence="1">Small ribosomal subunit protein uS5</fullName>
    </recommendedName>
    <alternativeName>
        <fullName evidence="2">30S ribosomal protein S5</fullName>
    </alternativeName>
</protein>
<comment type="function">
    <text evidence="1">With S4 and S12 plays an important role in translational accuracy.</text>
</comment>
<comment type="function">
    <text evidence="1">Located at the back of the 30S subunit body where it stabilizes the conformation of the head with respect to the body.</text>
</comment>
<comment type="subunit">
    <text evidence="1">Part of the 30S ribosomal subunit. Contacts proteins S4 and S8.</text>
</comment>
<comment type="domain">
    <text>The N-terminal domain interacts with the head of the 30S subunit; the C-terminal domain interacts with the body and contacts protein S4. The interaction surface between S4 and S5 is involved in control of translational fidelity.</text>
</comment>
<comment type="similarity">
    <text evidence="1">Belongs to the universal ribosomal protein uS5 family.</text>
</comment>
<organism>
    <name type="scientific">Rickettsia rickettsii (strain Iowa)</name>
    <dbReference type="NCBI Taxonomy" id="452659"/>
    <lineage>
        <taxon>Bacteria</taxon>
        <taxon>Pseudomonadati</taxon>
        <taxon>Pseudomonadota</taxon>
        <taxon>Alphaproteobacteria</taxon>
        <taxon>Rickettsiales</taxon>
        <taxon>Rickettsiaceae</taxon>
        <taxon>Rickettsieae</taxon>
        <taxon>Rickettsia</taxon>
        <taxon>spotted fever group</taxon>
    </lineage>
</organism>
<feature type="chain" id="PRO_1000140891" description="Small ribosomal subunit protein uS5">
    <location>
        <begin position="1"/>
        <end position="176"/>
    </location>
</feature>
<feature type="domain" description="S5 DRBM" evidence="1">
    <location>
        <begin position="11"/>
        <end position="74"/>
    </location>
</feature>
<gene>
    <name evidence="1" type="primary">rpsE</name>
    <name type="ordered locus">RrIowa_1180</name>
</gene>
<dbReference type="EMBL" id="CP000766">
    <property type="protein sequence ID" value="ABY72953.1"/>
    <property type="molecule type" value="Genomic_DNA"/>
</dbReference>
<dbReference type="RefSeq" id="WP_012151140.1">
    <property type="nucleotide sequence ID" value="NC_010263.3"/>
</dbReference>
<dbReference type="SMR" id="B0BUP3"/>
<dbReference type="GeneID" id="79937653"/>
<dbReference type="KEGG" id="rrj:RrIowa_1180"/>
<dbReference type="eggNOG" id="COG0098">
    <property type="taxonomic scope" value="Bacteria"/>
</dbReference>
<dbReference type="HOGENOM" id="CLU_065898_2_2_5"/>
<dbReference type="Proteomes" id="UP000000796">
    <property type="component" value="Chromosome"/>
</dbReference>
<dbReference type="GO" id="GO:0015935">
    <property type="term" value="C:small ribosomal subunit"/>
    <property type="evidence" value="ECO:0007669"/>
    <property type="project" value="InterPro"/>
</dbReference>
<dbReference type="GO" id="GO:0019843">
    <property type="term" value="F:rRNA binding"/>
    <property type="evidence" value="ECO:0007669"/>
    <property type="project" value="UniProtKB-UniRule"/>
</dbReference>
<dbReference type="GO" id="GO:0003735">
    <property type="term" value="F:structural constituent of ribosome"/>
    <property type="evidence" value="ECO:0007669"/>
    <property type="project" value="InterPro"/>
</dbReference>
<dbReference type="GO" id="GO:0006412">
    <property type="term" value="P:translation"/>
    <property type="evidence" value="ECO:0007669"/>
    <property type="project" value="UniProtKB-UniRule"/>
</dbReference>
<dbReference type="FunFam" id="3.30.230.10:FF:000002">
    <property type="entry name" value="30S ribosomal protein S5"/>
    <property type="match status" value="1"/>
</dbReference>
<dbReference type="Gene3D" id="3.30.160.20">
    <property type="match status" value="1"/>
</dbReference>
<dbReference type="Gene3D" id="3.30.230.10">
    <property type="match status" value="1"/>
</dbReference>
<dbReference type="HAMAP" id="MF_01307_B">
    <property type="entry name" value="Ribosomal_uS5_B"/>
    <property type="match status" value="1"/>
</dbReference>
<dbReference type="InterPro" id="IPR020568">
    <property type="entry name" value="Ribosomal_Su5_D2-typ_SF"/>
</dbReference>
<dbReference type="InterPro" id="IPR000851">
    <property type="entry name" value="Ribosomal_uS5"/>
</dbReference>
<dbReference type="InterPro" id="IPR005712">
    <property type="entry name" value="Ribosomal_uS5_bac-type"/>
</dbReference>
<dbReference type="InterPro" id="IPR005324">
    <property type="entry name" value="Ribosomal_uS5_C"/>
</dbReference>
<dbReference type="InterPro" id="IPR013810">
    <property type="entry name" value="Ribosomal_uS5_N"/>
</dbReference>
<dbReference type="InterPro" id="IPR018192">
    <property type="entry name" value="Ribosomal_uS5_N_CS"/>
</dbReference>
<dbReference type="InterPro" id="IPR014721">
    <property type="entry name" value="Ribsml_uS5_D2-typ_fold_subgr"/>
</dbReference>
<dbReference type="NCBIfam" id="TIGR01021">
    <property type="entry name" value="rpsE_bact"/>
    <property type="match status" value="1"/>
</dbReference>
<dbReference type="PANTHER" id="PTHR48277">
    <property type="entry name" value="MITOCHONDRIAL RIBOSOMAL PROTEIN S5"/>
    <property type="match status" value="1"/>
</dbReference>
<dbReference type="PANTHER" id="PTHR48277:SF1">
    <property type="entry name" value="MITOCHONDRIAL RIBOSOMAL PROTEIN S5"/>
    <property type="match status" value="1"/>
</dbReference>
<dbReference type="Pfam" id="PF00333">
    <property type="entry name" value="Ribosomal_S5"/>
    <property type="match status" value="1"/>
</dbReference>
<dbReference type="Pfam" id="PF03719">
    <property type="entry name" value="Ribosomal_S5_C"/>
    <property type="match status" value="1"/>
</dbReference>
<dbReference type="SUPFAM" id="SSF54768">
    <property type="entry name" value="dsRNA-binding domain-like"/>
    <property type="match status" value="1"/>
</dbReference>
<dbReference type="SUPFAM" id="SSF54211">
    <property type="entry name" value="Ribosomal protein S5 domain 2-like"/>
    <property type="match status" value="1"/>
</dbReference>
<dbReference type="PROSITE" id="PS00585">
    <property type="entry name" value="RIBOSOMAL_S5"/>
    <property type="match status" value="1"/>
</dbReference>
<dbReference type="PROSITE" id="PS50881">
    <property type="entry name" value="S5_DSRBD"/>
    <property type="match status" value="1"/>
</dbReference>
<evidence type="ECO:0000255" key="1">
    <source>
        <dbReference type="HAMAP-Rule" id="MF_01307"/>
    </source>
</evidence>
<evidence type="ECO:0000305" key="2"/>
<sequence>MSKVKKNDETLSEVLVDVNRVTKVVKGGRSFAFSAYVVVGDKAGRVGAGHGKAKEVNEARGKAKQAAKKRMMKVPLYQNRTIHHDVVGKSGAAKVILRRAKAGTGVIAGGSMRAIFDSLGIHDVVAKSIGSTNVYAMISATFDALNKLASPKSIAMRRDKKVNEISVKSADIQVNE</sequence>
<accession>B0BUP3</accession>
<proteinExistence type="inferred from homology"/>
<name>RS5_RICRO</name>
<reference key="1">
    <citation type="journal article" date="2008" name="Infect. Immun.">
        <title>Genomic comparison of virulent Rickettsia rickettsii Sheila Smith and avirulent Rickettsia rickettsii Iowa.</title>
        <authorList>
            <person name="Ellison D.W."/>
            <person name="Clark T.R."/>
            <person name="Sturdevant D.E."/>
            <person name="Virtaneva K."/>
            <person name="Porcella S.F."/>
            <person name="Hackstadt T."/>
        </authorList>
    </citation>
    <scope>NUCLEOTIDE SEQUENCE [LARGE SCALE GENOMIC DNA]</scope>
    <source>
        <strain>Iowa</strain>
    </source>
</reference>